<keyword id="KW-0963">Cytoplasm</keyword>
<keyword id="KW-0479">Metal-binding</keyword>
<keyword id="KW-0862">Zinc</keyword>
<reference key="1">
    <citation type="journal article" date="2009" name="PLoS Genet.">
        <title>Organised genome dynamics in the Escherichia coli species results in highly diverse adaptive paths.</title>
        <authorList>
            <person name="Touchon M."/>
            <person name="Hoede C."/>
            <person name="Tenaillon O."/>
            <person name="Barbe V."/>
            <person name="Baeriswyl S."/>
            <person name="Bidet P."/>
            <person name="Bingen E."/>
            <person name="Bonacorsi S."/>
            <person name="Bouchier C."/>
            <person name="Bouvet O."/>
            <person name="Calteau A."/>
            <person name="Chiapello H."/>
            <person name="Clermont O."/>
            <person name="Cruveiller S."/>
            <person name="Danchin A."/>
            <person name="Diard M."/>
            <person name="Dossat C."/>
            <person name="Karoui M.E."/>
            <person name="Frapy E."/>
            <person name="Garry L."/>
            <person name="Ghigo J.M."/>
            <person name="Gilles A.M."/>
            <person name="Johnson J."/>
            <person name="Le Bouguenec C."/>
            <person name="Lescat M."/>
            <person name="Mangenot S."/>
            <person name="Martinez-Jehanne V."/>
            <person name="Matic I."/>
            <person name="Nassif X."/>
            <person name="Oztas S."/>
            <person name="Petit M.A."/>
            <person name="Pichon C."/>
            <person name="Rouy Z."/>
            <person name="Ruf C.S."/>
            <person name="Schneider D."/>
            <person name="Tourret J."/>
            <person name="Vacherie B."/>
            <person name="Vallenet D."/>
            <person name="Medigue C."/>
            <person name="Rocha E.P.C."/>
            <person name="Denamur E."/>
        </authorList>
    </citation>
    <scope>NUCLEOTIDE SEQUENCE [LARGE SCALE GENOMIC DNA]</scope>
    <source>
        <strain>ED1a</strain>
    </source>
</reference>
<proteinExistence type="inferred from homology"/>
<feature type="chain" id="PRO_1000148333" description="Protein SprT">
    <location>
        <begin position="1"/>
        <end position="165"/>
    </location>
</feature>
<feature type="domain" description="SprT-like" evidence="1">
    <location>
        <begin position="20"/>
        <end position="163"/>
    </location>
</feature>
<feature type="active site" evidence="1">
    <location>
        <position position="79"/>
    </location>
</feature>
<feature type="binding site" evidence="1">
    <location>
        <position position="78"/>
    </location>
    <ligand>
        <name>Zn(2+)</name>
        <dbReference type="ChEBI" id="CHEBI:29105"/>
    </ligand>
</feature>
<feature type="binding site" evidence="1">
    <location>
        <position position="82"/>
    </location>
    <ligand>
        <name>Zn(2+)</name>
        <dbReference type="ChEBI" id="CHEBI:29105"/>
    </ligand>
</feature>
<protein>
    <recommendedName>
        <fullName evidence="1">Protein SprT</fullName>
    </recommendedName>
</protein>
<sequence>MKTSRLPIAIQQAVMRRLREKLAQANLKLGRNYPEPKLSYTQRGTSAGTAWLESYEIRLNPVLLLENSEAFIEEVVPHELAHLLVWKHFGRVAPHGKEWKWMMESVLGVPARRTHQFELQSVRRNTFPYRCKCQEHQLTVRRHNRVVRGEAVYRCVHCGEQLVAK</sequence>
<organism>
    <name type="scientific">Escherichia coli O81 (strain ED1a)</name>
    <dbReference type="NCBI Taxonomy" id="585397"/>
    <lineage>
        <taxon>Bacteria</taxon>
        <taxon>Pseudomonadati</taxon>
        <taxon>Pseudomonadota</taxon>
        <taxon>Gammaproteobacteria</taxon>
        <taxon>Enterobacterales</taxon>
        <taxon>Enterobacteriaceae</taxon>
        <taxon>Escherichia</taxon>
    </lineage>
</organism>
<gene>
    <name evidence="1" type="primary">sprT</name>
    <name type="ordered locus">ECED1_3407</name>
</gene>
<accession>B7MZP3</accession>
<comment type="cofactor">
    <cofactor evidence="1">
        <name>Zn(2+)</name>
        <dbReference type="ChEBI" id="CHEBI:29105"/>
    </cofactor>
    <text evidence="1">Binds 1 zinc ion.</text>
</comment>
<comment type="subcellular location">
    <subcellularLocation>
        <location evidence="1">Cytoplasm</location>
    </subcellularLocation>
</comment>
<comment type="similarity">
    <text evidence="1">Belongs to the SprT family.</text>
</comment>
<name>SPRT_ECO81</name>
<dbReference type="EMBL" id="CU928162">
    <property type="protein sequence ID" value="CAR09561.2"/>
    <property type="molecule type" value="Genomic_DNA"/>
</dbReference>
<dbReference type="RefSeq" id="WP_000858396.1">
    <property type="nucleotide sequence ID" value="NC_011745.1"/>
</dbReference>
<dbReference type="SMR" id="B7MZP3"/>
<dbReference type="KEGG" id="ecq:ECED1_3407"/>
<dbReference type="HOGENOM" id="CLU_113336_0_1_6"/>
<dbReference type="Proteomes" id="UP000000748">
    <property type="component" value="Chromosome"/>
</dbReference>
<dbReference type="GO" id="GO:0005737">
    <property type="term" value="C:cytoplasm"/>
    <property type="evidence" value="ECO:0007669"/>
    <property type="project" value="UniProtKB-SubCell"/>
</dbReference>
<dbReference type="GO" id="GO:0008270">
    <property type="term" value="F:zinc ion binding"/>
    <property type="evidence" value="ECO:0007669"/>
    <property type="project" value="UniProtKB-UniRule"/>
</dbReference>
<dbReference type="GO" id="GO:0006950">
    <property type="term" value="P:response to stress"/>
    <property type="evidence" value="ECO:0007669"/>
    <property type="project" value="UniProtKB-ARBA"/>
</dbReference>
<dbReference type="Gene3D" id="3.30.2010.10">
    <property type="entry name" value="Metalloproteases ('zincins'), catalytic domain"/>
    <property type="match status" value="1"/>
</dbReference>
<dbReference type="HAMAP" id="MF_00746">
    <property type="entry name" value="SprT"/>
    <property type="match status" value="1"/>
</dbReference>
<dbReference type="InterPro" id="IPR006640">
    <property type="entry name" value="SprT-like_domain"/>
</dbReference>
<dbReference type="InterPro" id="IPR035240">
    <property type="entry name" value="SprT_Zn_ribbon"/>
</dbReference>
<dbReference type="InterPro" id="IPR023483">
    <property type="entry name" value="Uncharacterised_SprT"/>
</dbReference>
<dbReference type="NCBIfam" id="NF003421">
    <property type="entry name" value="PRK04860.1"/>
    <property type="match status" value="1"/>
</dbReference>
<dbReference type="PANTHER" id="PTHR38773">
    <property type="entry name" value="PROTEIN SPRT"/>
    <property type="match status" value="1"/>
</dbReference>
<dbReference type="PANTHER" id="PTHR38773:SF1">
    <property type="entry name" value="PROTEIN SPRT"/>
    <property type="match status" value="1"/>
</dbReference>
<dbReference type="Pfam" id="PF10263">
    <property type="entry name" value="SprT-like"/>
    <property type="match status" value="1"/>
</dbReference>
<dbReference type="Pfam" id="PF17283">
    <property type="entry name" value="Zn_ribbon_SprT"/>
    <property type="match status" value="1"/>
</dbReference>
<dbReference type="SMART" id="SM00731">
    <property type="entry name" value="SprT"/>
    <property type="match status" value="1"/>
</dbReference>
<dbReference type="PROSITE" id="PS00142">
    <property type="entry name" value="ZINC_PROTEASE"/>
    <property type="match status" value="1"/>
</dbReference>
<evidence type="ECO:0000255" key="1">
    <source>
        <dbReference type="HAMAP-Rule" id="MF_00746"/>
    </source>
</evidence>